<dbReference type="EMBL" id="AJ487515">
    <property type="protein sequence ID" value="CAD31783.1"/>
    <property type="molecule type" value="mRNA"/>
</dbReference>
<dbReference type="EMBL" id="AK122570">
    <property type="protein sequence ID" value="BAC65852.1"/>
    <property type="status" value="ALT_INIT"/>
    <property type="molecule type" value="mRNA"/>
</dbReference>
<dbReference type="CCDS" id="CCDS19285.1">
    <molecule id="Q8K4Z0-1"/>
</dbReference>
<dbReference type="CCDS" id="CCDS80281.1">
    <molecule id="Q8K4Z0-2"/>
</dbReference>
<dbReference type="RefSeq" id="NP_001297533.1">
    <molecule id="Q8K4Z0-2"/>
    <property type="nucleotide sequence ID" value="NM_001310604.1"/>
</dbReference>
<dbReference type="RefSeq" id="NP_659194.1">
    <molecule id="Q8K4Z0-1"/>
    <property type="nucleotide sequence ID" value="NM_144945.3"/>
</dbReference>
<dbReference type="SMR" id="Q8K4Z0"/>
<dbReference type="FunCoup" id="Q8K4Z0">
    <property type="interactions" value="520"/>
</dbReference>
<dbReference type="STRING" id="10090.ENSMUSP00000040436"/>
<dbReference type="GlyConnect" id="2425">
    <molecule id="Q8K4Z0-2"/>
    <property type="glycosylation" value="2 N-Linked glycans (1 site)"/>
</dbReference>
<dbReference type="GlyCosmos" id="Q8K4Z0">
    <property type="glycosylation" value="4 sites, No reported glycans"/>
</dbReference>
<dbReference type="GlyGen" id="Q8K4Z0">
    <property type="glycosylation" value="4 sites, 3 N-linked glycans (3 sites)"/>
</dbReference>
<dbReference type="PhosphoSitePlus" id="Q8K4Z0"/>
<dbReference type="SwissPalm" id="Q8K4Z0"/>
<dbReference type="PaxDb" id="10090-ENSMUSP00000040436"/>
<dbReference type="PeptideAtlas" id="Q8K4Z0"/>
<dbReference type="ProteomicsDB" id="265066">
    <molecule id="Q8K4Z0-1"/>
</dbReference>
<dbReference type="ProteomicsDB" id="265067">
    <molecule id="Q8K4Z0-2"/>
</dbReference>
<dbReference type="Antibodypedia" id="2543">
    <property type="antibodies" value="141 antibodies from 31 providers"/>
</dbReference>
<dbReference type="DNASU" id="246316"/>
<dbReference type="Ensembl" id="ENSMUST00000039750.7">
    <molecule id="Q8K4Z0-1"/>
    <property type="protein sequence ID" value="ENSMUSP00000040436.6"/>
    <property type="gene ID" value="ENSMUSG00000039252.12"/>
</dbReference>
<dbReference type="Ensembl" id="ENSMUST00000199942.5">
    <molecule id="Q8K4Z0-2"/>
    <property type="protein sequence ID" value="ENSMUSP00000143707.2"/>
    <property type="gene ID" value="ENSMUSG00000039252.12"/>
</dbReference>
<dbReference type="GeneID" id="246316"/>
<dbReference type="KEGG" id="mmu:246316"/>
<dbReference type="UCSC" id="uc008xkm.1">
    <molecule id="Q8K4Z0-1"/>
    <property type="organism name" value="mouse"/>
</dbReference>
<dbReference type="AGR" id="MGI:2180196"/>
<dbReference type="CTD" id="55203"/>
<dbReference type="MGI" id="MGI:2180196">
    <property type="gene designation" value="Lgi2"/>
</dbReference>
<dbReference type="VEuPathDB" id="HostDB:ENSMUSG00000039252"/>
<dbReference type="eggNOG" id="ENOG502QR53">
    <property type="taxonomic scope" value="Eukaryota"/>
</dbReference>
<dbReference type="GeneTree" id="ENSGT00940000157294"/>
<dbReference type="InParanoid" id="Q8K4Z0"/>
<dbReference type="OMA" id="CWRESAL"/>
<dbReference type="OrthoDB" id="6066926at2759"/>
<dbReference type="PhylomeDB" id="Q8K4Z0"/>
<dbReference type="TreeFam" id="TF333155"/>
<dbReference type="Reactome" id="R-MMU-5682910">
    <property type="pathway name" value="LGI-ADAM interactions"/>
</dbReference>
<dbReference type="BioGRID-ORCS" id="246316">
    <property type="hits" value="0 hits in 60 CRISPR screens"/>
</dbReference>
<dbReference type="ChiTaRS" id="Lgi2">
    <property type="organism name" value="mouse"/>
</dbReference>
<dbReference type="PRO" id="PR:Q8K4Z0"/>
<dbReference type="Proteomes" id="UP000000589">
    <property type="component" value="Chromosome 5"/>
</dbReference>
<dbReference type="RNAct" id="Q8K4Z0">
    <property type="molecule type" value="protein"/>
</dbReference>
<dbReference type="Bgee" id="ENSMUSG00000039252">
    <property type="expression patterns" value="Expressed in conjunctival fornix and 204 other cell types or tissues"/>
</dbReference>
<dbReference type="ExpressionAtlas" id="Q8K4Z0">
    <property type="expression patterns" value="baseline and differential"/>
</dbReference>
<dbReference type="GO" id="GO:0005615">
    <property type="term" value="C:extracellular space"/>
    <property type="evidence" value="ECO:0007005"/>
    <property type="project" value="BHF-UCL"/>
</dbReference>
<dbReference type="GO" id="GO:1904862">
    <property type="term" value="P:inhibitory synapse assembly"/>
    <property type="evidence" value="ECO:0000315"/>
    <property type="project" value="UniProtKB"/>
</dbReference>
<dbReference type="Gene3D" id="3.80.10.10">
    <property type="entry name" value="Ribonuclease Inhibitor"/>
    <property type="match status" value="1"/>
</dbReference>
<dbReference type="InterPro" id="IPR000483">
    <property type="entry name" value="Cys-rich_flank_reg_C"/>
</dbReference>
<dbReference type="InterPro" id="IPR009039">
    <property type="entry name" value="EAR"/>
</dbReference>
<dbReference type="InterPro" id="IPR005492">
    <property type="entry name" value="EPTP"/>
</dbReference>
<dbReference type="InterPro" id="IPR001611">
    <property type="entry name" value="Leu-rich_rpt"/>
</dbReference>
<dbReference type="InterPro" id="IPR003591">
    <property type="entry name" value="Leu-rich_rpt_typical-subtyp"/>
</dbReference>
<dbReference type="InterPro" id="IPR051295">
    <property type="entry name" value="LGI_related"/>
</dbReference>
<dbReference type="InterPro" id="IPR032675">
    <property type="entry name" value="LRR_dom_sf"/>
</dbReference>
<dbReference type="PANTHER" id="PTHR24367:SF21">
    <property type="entry name" value="LEUCINE-RICH REPEAT LGI FAMILY MEMBER 2"/>
    <property type="match status" value="1"/>
</dbReference>
<dbReference type="PANTHER" id="PTHR24367">
    <property type="entry name" value="LEUCINE-RICH REPEAT-CONTAINING PROTEIN"/>
    <property type="match status" value="1"/>
</dbReference>
<dbReference type="Pfam" id="PF03736">
    <property type="entry name" value="EPTP"/>
    <property type="match status" value="7"/>
</dbReference>
<dbReference type="Pfam" id="PF13855">
    <property type="entry name" value="LRR_8"/>
    <property type="match status" value="1"/>
</dbReference>
<dbReference type="SMART" id="SM00369">
    <property type="entry name" value="LRR_TYP"/>
    <property type="match status" value="2"/>
</dbReference>
<dbReference type="SMART" id="SM00082">
    <property type="entry name" value="LRRCT"/>
    <property type="match status" value="1"/>
</dbReference>
<dbReference type="SUPFAM" id="SSF75011">
    <property type="entry name" value="3-carboxy-cis,cis-mucoante lactonizing enzyme"/>
    <property type="match status" value="1"/>
</dbReference>
<dbReference type="SUPFAM" id="SSF52058">
    <property type="entry name" value="L domain-like"/>
    <property type="match status" value="1"/>
</dbReference>
<dbReference type="PROSITE" id="PS50912">
    <property type="entry name" value="EAR"/>
    <property type="match status" value="7"/>
</dbReference>
<feature type="signal peptide" evidence="1">
    <location>
        <begin position="1"/>
        <end position="25"/>
    </location>
</feature>
<feature type="chain" id="PRO_0000017709" description="Leucine-rich repeat LGI family member 2">
    <location>
        <begin position="26"/>
        <end position="550"/>
    </location>
</feature>
<feature type="domain" description="LRRNT">
    <location>
        <begin position="26"/>
        <end position="62"/>
    </location>
</feature>
<feature type="repeat" description="LRR 1">
    <location>
        <begin position="83"/>
        <end position="104"/>
    </location>
</feature>
<feature type="repeat" description="LRR 2">
    <location>
        <begin position="107"/>
        <end position="128"/>
    </location>
</feature>
<feature type="domain" description="LRRCT">
    <location>
        <begin position="140"/>
        <end position="190"/>
    </location>
</feature>
<feature type="repeat" description="EAR 1" evidence="2">
    <location>
        <begin position="224"/>
        <end position="266"/>
    </location>
</feature>
<feature type="repeat" description="EAR 2" evidence="2">
    <location>
        <begin position="270"/>
        <end position="312"/>
    </location>
</feature>
<feature type="repeat" description="EAR 3" evidence="2">
    <location>
        <begin position="316"/>
        <end position="363"/>
    </location>
</feature>
<feature type="repeat" description="EAR 4" evidence="2">
    <location>
        <begin position="365"/>
        <end position="408"/>
    </location>
</feature>
<feature type="repeat" description="EAR 5" evidence="2">
    <location>
        <begin position="412"/>
        <end position="455"/>
    </location>
</feature>
<feature type="repeat" description="EAR 6" evidence="2">
    <location>
        <begin position="457"/>
        <end position="499"/>
    </location>
</feature>
<feature type="repeat" description="EAR 7" evidence="2">
    <location>
        <begin position="503"/>
        <end position="545"/>
    </location>
</feature>
<feature type="glycosylation site" description="N-linked (GlcNAc...) asparagine" evidence="1">
    <location>
        <position position="67"/>
    </location>
</feature>
<feature type="glycosylation site" description="N-linked (GlcNAc...) asparagine" evidence="1">
    <location>
        <position position="159"/>
    </location>
</feature>
<feature type="glycosylation site" description="N-linked (GlcNAc...) asparagine" evidence="1">
    <location>
        <position position="276"/>
    </location>
</feature>
<feature type="glycosylation site" description="N-linked (GlcNAc...) asparagine" evidence="1">
    <location>
        <position position="407"/>
    </location>
</feature>
<feature type="splice variant" id="VSP_007680" description="In isoform 2." evidence="5">
    <original>L</original>
    <variation>LSLANNHIKALPRDVFSDLDSLIEL</variation>
    <location>
        <position position="135"/>
    </location>
</feature>
<feature type="splice variant" id="VSP_007681" description="In isoform 2." evidence="5">
    <location>
        <begin position="192"/>
        <end position="223"/>
    </location>
</feature>
<accession>Q8K4Z0</accession>
<accession>Q80T76</accession>
<proteinExistence type="evidence at transcript level"/>
<reference key="1">
    <citation type="journal article" date="2002" name="Trends Biochem. Sci.">
        <title>The novel EPTP repeat defines a superfamily of proteins implicated in epileptic disorders.</title>
        <authorList>
            <person name="Staub E."/>
            <person name="Perez-Tur J."/>
            <person name="Siebert R."/>
            <person name="Nobile C."/>
            <person name="Moschonas N.K."/>
            <person name="Deloukas P."/>
            <person name="Hinzmann B."/>
        </authorList>
    </citation>
    <scope>NUCLEOTIDE SEQUENCE [MRNA] (ISOFORM 1)</scope>
    <source>
        <strain>C57BL/6J</strain>
    </source>
</reference>
<reference key="2">
    <citation type="journal article" date="2003" name="DNA Res.">
        <title>Prediction of the coding sequences of mouse homologues of KIAA gene: II. The complete nucleotide sequences of 400 mouse KIAA-homologous cDNAs identified by screening of terminal sequences of cDNA clones randomly sampled from size-fractionated libraries.</title>
        <authorList>
            <person name="Okazaki N."/>
            <person name="Kikuno R."/>
            <person name="Ohara R."/>
            <person name="Inamoto S."/>
            <person name="Aizawa H."/>
            <person name="Yuasa S."/>
            <person name="Nakajima D."/>
            <person name="Nagase T."/>
            <person name="Ohara O."/>
            <person name="Koga H."/>
        </authorList>
    </citation>
    <scope>NUCLEOTIDE SEQUENCE [LARGE SCALE MRNA] (ISOFORM 1)</scope>
    <source>
        <tissue>Brain</tissue>
    </source>
</reference>
<reference key="3">
    <citation type="journal article" date="2010" name="Brain Res.">
        <title>Regional distribution of the leucine-rich glioma inactivated (LGI) gene family transcripts in the adult mouse brain.</title>
        <authorList>
            <person name="Herranz-Perez V."/>
            <person name="Olucha-Bordonau F.E."/>
            <person name="Morante-Redolat J.M."/>
            <person name="Perez-Tur J."/>
        </authorList>
    </citation>
    <scope>TISSUE SPECIFICITY</scope>
</reference>
<reference key="4">
    <citation type="journal article" date="2019" name="Science">
        <title>Distinct molecular programs regulate synapse specificity in cortical inhibitory circuits.</title>
        <authorList>
            <person name="Favuzzi E."/>
            <person name="Deogracias R."/>
            <person name="Marques-Smith A."/>
            <person name="Maeso P."/>
            <person name="Jezequel J."/>
            <person name="Exposito-Alonso D."/>
            <person name="Balia M."/>
            <person name="Kroon T."/>
            <person name="Hinojosa A.J."/>
            <person name="Maraver E.F."/>
            <person name="Rico B."/>
        </authorList>
    </citation>
    <scope>FUNCTION</scope>
    <scope>DEVELOPMENTAL STAGE</scope>
</reference>
<keyword id="KW-0025">Alternative splicing</keyword>
<keyword id="KW-0325">Glycoprotein</keyword>
<keyword id="KW-0433">Leucine-rich repeat</keyword>
<keyword id="KW-1185">Reference proteome</keyword>
<keyword id="KW-0677">Repeat</keyword>
<keyword id="KW-0964">Secreted</keyword>
<keyword id="KW-0732">Signal</keyword>
<sequence>MALWRGGGALGLLLLSAACLIPPSAQVRRLARCPATCSCTKESIICVGSSWVPRIVPGDISSLSLVNGTFLEIKDRMFSHLPSLQLLLLNSNSFTVIRDDAFAGLFHLEYLFIEGNKIETISRNAFRGLRDLTHLDLRGNKFECDCKAKWLYLWLKMTNSTVSDVLCIGPPEYQEKKLNEVTSFDYECTTTGPQTDEAKQRGWQLELSLGFCELIFVFQHPLSDFVVHQTLPYQSVSVDTFNSKNDVYVAIAQPSMENCMVLEWDHIEMNFRSYDNITGQSIVGCKAILIDDQVFVVVAQLFGGSHIYKYDESWTKFVKFQDIEVSRISKPNDIELFEIDDETFFIIADSSKAGLSTVYKWNSKGFYSYQSLHEWFRDTDAEFVDIDGKSHLILSSRSQVPIILQWNKSSKKFVPHGDIPNMEDVLAVKSFRMQNTLYLSLTRFIGDSRVMRWNSKQFVEVQALPSRGAMTLQPFSFKDNHYLALGSDYTFSQIYQWDKEKQQFKKFKEIYVQAPRSFTAVSTDRRDFFFASSFKGKTKIFEHIIVDLSL</sequence>
<organism>
    <name type="scientific">Mus musculus</name>
    <name type="common">Mouse</name>
    <dbReference type="NCBI Taxonomy" id="10090"/>
    <lineage>
        <taxon>Eukaryota</taxon>
        <taxon>Metazoa</taxon>
        <taxon>Chordata</taxon>
        <taxon>Craniata</taxon>
        <taxon>Vertebrata</taxon>
        <taxon>Euteleostomi</taxon>
        <taxon>Mammalia</taxon>
        <taxon>Eutheria</taxon>
        <taxon>Euarchontoglires</taxon>
        <taxon>Glires</taxon>
        <taxon>Rodentia</taxon>
        <taxon>Myomorpha</taxon>
        <taxon>Muroidea</taxon>
        <taxon>Muridae</taxon>
        <taxon>Murinae</taxon>
        <taxon>Mus</taxon>
        <taxon>Mus</taxon>
    </lineage>
</organism>
<gene>
    <name type="primary">Lgi2</name>
    <name type="synonym">Kiaa1916</name>
</gene>
<protein>
    <recommendedName>
        <fullName>Leucine-rich repeat LGI family member 2</fullName>
    </recommendedName>
    <alternativeName>
        <fullName>Leucine-rich glioma-inactivated protein 2</fullName>
    </alternativeName>
</protein>
<evidence type="ECO:0000255" key="1"/>
<evidence type="ECO:0000255" key="2">
    <source>
        <dbReference type="PROSITE-ProRule" id="PRU00075"/>
    </source>
</evidence>
<evidence type="ECO:0000269" key="3">
    <source>
    </source>
</evidence>
<evidence type="ECO:0000269" key="4">
    <source>
    </source>
</evidence>
<evidence type="ECO:0000305" key="5"/>
<comment type="function">
    <text evidence="4">Required for the development of soma-targeting inhibitory GABAergic synapses made by parvalbumin-positive basket cells.</text>
</comment>
<comment type="subcellular location">
    <subcellularLocation>
        <location evidence="5">Secreted</location>
    </subcellularLocation>
</comment>
<comment type="alternative products">
    <event type="alternative splicing"/>
    <isoform>
        <id>Q8K4Z0-1</id>
        <name>1</name>
        <sequence type="displayed"/>
    </isoform>
    <isoform>
        <id>Q8K4Z0-2</id>
        <name>2</name>
        <sequence type="described" ref="VSP_007680 VSP_007681"/>
    </isoform>
</comment>
<comment type="tissue specificity">
    <text evidence="3">Brain.</text>
</comment>
<comment type="developmental stage">
    <text evidence="4">Expressed in developing parvalbumin-positive basket cells.</text>
</comment>
<comment type="sequence caution" evidence="5">
    <conflict type="erroneous initiation">
        <sequence resource="EMBL-CDS" id="BAC65852"/>
    </conflict>
</comment>
<name>LGI2_MOUSE</name>